<evidence type="ECO:0000256" key="1">
    <source>
        <dbReference type="SAM" id="MobiDB-lite"/>
    </source>
</evidence>
<dbReference type="EMBL" id="X99797">
    <property type="protein sequence ID" value="CAA68130.1"/>
    <property type="molecule type" value="mRNA"/>
</dbReference>
<dbReference type="RefSeq" id="NP_062076.1">
    <property type="nucleotide sequence ID" value="NM_019203.2"/>
</dbReference>
<dbReference type="STRING" id="10116.ENSRNOP00000003922"/>
<dbReference type="iPTMnet" id="P70537"/>
<dbReference type="PhosphoSitePlus" id="P70537"/>
<dbReference type="PaxDb" id="10116-ENSRNOP00000003922"/>
<dbReference type="GeneID" id="29391"/>
<dbReference type="KEGG" id="rno:29391"/>
<dbReference type="UCSC" id="RGD:3914">
    <property type="organism name" value="rat"/>
</dbReference>
<dbReference type="AGR" id="RGD:3914"/>
<dbReference type="CTD" id="22127"/>
<dbReference type="RGD" id="3914">
    <property type="gene designation" value="Tsx"/>
</dbReference>
<dbReference type="VEuPathDB" id="HostDB:ENSRNOG00000037919"/>
<dbReference type="eggNOG" id="ENOG502TCXD">
    <property type="taxonomic scope" value="Eukaryota"/>
</dbReference>
<dbReference type="HOGENOM" id="CLU_1795880_0_0_1"/>
<dbReference type="InParanoid" id="P70537"/>
<dbReference type="TreeFam" id="TF339784"/>
<dbReference type="PRO" id="PR:P70537"/>
<dbReference type="Proteomes" id="UP000002494">
    <property type="component" value="Chromosome X"/>
</dbReference>
<dbReference type="Bgee" id="ENSRNOG00000002925">
    <property type="expression patterns" value="Expressed in testis and 13 other cell types or tissues"/>
</dbReference>
<dbReference type="InterPro" id="IPR035352">
    <property type="entry name" value="TSX"/>
</dbReference>
<dbReference type="Pfam" id="PF17397">
    <property type="entry name" value="TSX"/>
    <property type="match status" value="1"/>
</dbReference>
<name>TSX_RAT</name>
<keyword id="KW-1185">Reference proteome</keyword>
<feature type="chain" id="PRO_0000065673" description="Testis-specific protein TSX">
    <location>
        <begin position="1"/>
        <end position="144"/>
    </location>
</feature>
<feature type="region of interest" description="Disordered" evidence="1">
    <location>
        <begin position="67"/>
        <end position="99"/>
    </location>
</feature>
<feature type="compositionally biased region" description="Polar residues" evidence="1">
    <location>
        <begin position="72"/>
        <end position="82"/>
    </location>
</feature>
<reference key="1">
    <citation type="journal article" date="1996" name="Hum. Mol. Genet.">
        <title>A 94 kb genomic sequence 3' to the murine Xist gene reveals an AT rich region containing a new testis specific gene Tsx.</title>
        <authorList>
            <person name="Simmler M.-C."/>
            <person name="Cunningham D.B."/>
            <person name="Clerc P."/>
            <person name="Vermat T."/>
            <person name="Caudron B."/>
            <person name="Cruaud C."/>
            <person name="Pawlak A."/>
            <person name="Szpirer C."/>
            <person name="Weissenbach J."/>
            <person name="Claverie J.-M."/>
            <person name="Avner P."/>
        </authorList>
    </citation>
    <scope>NUCLEOTIDE SEQUENCE [MRNA]</scope>
    <source>
        <tissue>Testis</tissue>
    </source>
</reference>
<protein>
    <recommendedName>
        <fullName>Testis-specific protein TSX</fullName>
    </recommendedName>
</protein>
<gene>
    <name type="primary">Tsx</name>
</gene>
<organism>
    <name type="scientific">Rattus norvegicus</name>
    <name type="common">Rat</name>
    <dbReference type="NCBI Taxonomy" id="10116"/>
    <lineage>
        <taxon>Eukaryota</taxon>
        <taxon>Metazoa</taxon>
        <taxon>Chordata</taxon>
        <taxon>Craniata</taxon>
        <taxon>Vertebrata</taxon>
        <taxon>Euteleostomi</taxon>
        <taxon>Mammalia</taxon>
        <taxon>Eutheria</taxon>
        <taxon>Euarchontoglires</taxon>
        <taxon>Glires</taxon>
        <taxon>Rodentia</taxon>
        <taxon>Myomorpha</taxon>
        <taxon>Muroidea</taxon>
        <taxon>Muridae</taxon>
        <taxon>Murinae</taxon>
        <taxon>Rattus</taxon>
    </lineage>
</organism>
<comment type="function">
    <text>May have an RNA/DNA binding role.</text>
</comment>
<comment type="tissue specificity">
    <text>Testis.</text>
</comment>
<sequence>MSEEQEPKTSEAEYGTMDFPEFENEEEWLFKVLGIKPRPSSDLDDADKQEDEPLGHTEFLRLQDILQEDKVSSTNDSDTCQAGYTEENDEASHSDSDIDDNVNVIIGDIKANSSMYMEMFTNMNSQADQDLKLTESDNAMYPTD</sequence>
<accession>P70537</accession>
<proteinExistence type="evidence at transcript level"/>